<dbReference type="EC" id="1.14.-.-" evidence="6"/>
<dbReference type="EMBL" id="EQ963479">
    <property type="protein sequence ID" value="EED49606.1"/>
    <property type="molecule type" value="Genomic_DNA"/>
</dbReference>
<dbReference type="RefSeq" id="XP_002379987.1">
    <property type="nucleotide sequence ID" value="XM_002379946.1"/>
</dbReference>
<dbReference type="SMR" id="B8NI22"/>
<dbReference type="STRING" id="332952.B8NI22"/>
<dbReference type="EnsemblFungi" id="EED49606">
    <property type="protein sequence ID" value="EED49606"/>
    <property type="gene ID" value="AFLA_064270"/>
</dbReference>
<dbReference type="VEuPathDB" id="FungiDB:AFLA_008361"/>
<dbReference type="eggNOG" id="KOG0143">
    <property type="taxonomic scope" value="Eukaryota"/>
</dbReference>
<dbReference type="HOGENOM" id="CLU_010119_6_1_1"/>
<dbReference type="OMA" id="TPWRVEE"/>
<dbReference type="GO" id="GO:0046872">
    <property type="term" value="F:metal ion binding"/>
    <property type="evidence" value="ECO:0007669"/>
    <property type="project" value="UniProtKB-KW"/>
</dbReference>
<dbReference type="GO" id="GO:0016491">
    <property type="term" value="F:oxidoreductase activity"/>
    <property type="evidence" value="ECO:0007669"/>
    <property type="project" value="UniProtKB-KW"/>
</dbReference>
<dbReference type="GO" id="GO:0044283">
    <property type="term" value="P:small molecule biosynthetic process"/>
    <property type="evidence" value="ECO:0007669"/>
    <property type="project" value="UniProtKB-ARBA"/>
</dbReference>
<dbReference type="Gene3D" id="2.60.120.330">
    <property type="entry name" value="B-lactam Antibiotic, Isopenicillin N Synthase, Chain"/>
    <property type="match status" value="1"/>
</dbReference>
<dbReference type="InterPro" id="IPR026992">
    <property type="entry name" value="DIOX_N"/>
</dbReference>
<dbReference type="InterPro" id="IPR044861">
    <property type="entry name" value="IPNS-like_FE2OG_OXY"/>
</dbReference>
<dbReference type="InterPro" id="IPR027443">
    <property type="entry name" value="IPNS-like_sf"/>
</dbReference>
<dbReference type="InterPro" id="IPR050231">
    <property type="entry name" value="Iron_ascorbate_oxido_reductase"/>
</dbReference>
<dbReference type="InterPro" id="IPR005123">
    <property type="entry name" value="Oxoglu/Fe-dep_dioxygenase_dom"/>
</dbReference>
<dbReference type="PANTHER" id="PTHR47990">
    <property type="entry name" value="2-OXOGLUTARATE (2OG) AND FE(II)-DEPENDENT OXYGENASE SUPERFAMILY PROTEIN-RELATED"/>
    <property type="match status" value="1"/>
</dbReference>
<dbReference type="Pfam" id="PF03171">
    <property type="entry name" value="2OG-FeII_Oxy"/>
    <property type="match status" value="1"/>
</dbReference>
<dbReference type="Pfam" id="PF14226">
    <property type="entry name" value="DIOX_N"/>
    <property type="match status" value="1"/>
</dbReference>
<dbReference type="SUPFAM" id="SSF51197">
    <property type="entry name" value="Clavaminate synthase-like"/>
    <property type="match status" value="1"/>
</dbReference>
<dbReference type="PROSITE" id="PS51471">
    <property type="entry name" value="FE2OG_OXY"/>
    <property type="match status" value="1"/>
</dbReference>
<organism>
    <name type="scientific">Aspergillus flavus (strain ATCC 200026 / FGSC A1120 / IAM 13836 / NRRL 3357 / JCM 12722 / SRRC 167)</name>
    <dbReference type="NCBI Taxonomy" id="332952"/>
    <lineage>
        <taxon>Eukaryota</taxon>
        <taxon>Fungi</taxon>
        <taxon>Dikarya</taxon>
        <taxon>Ascomycota</taxon>
        <taxon>Pezizomycotina</taxon>
        <taxon>Eurotiomycetes</taxon>
        <taxon>Eurotiomycetidae</taxon>
        <taxon>Eurotiales</taxon>
        <taxon>Aspergillaceae</taxon>
        <taxon>Aspergillus</taxon>
        <taxon>Aspergillus subgen. Circumdati</taxon>
    </lineage>
</organism>
<sequence length="364" mass="41194">MTMLSDLPKIPTLDWADFAEGDTDQRLKLAQGLVQGFKRFGFVKLVNHGLSDELIQQLFAEVKRFYRLPDELKQKAAHPPGPNPQRGWSGIGVESTSKLYGEQTERPSGKLKDAKVGTDFSSSKLSRELTHMKEHYDIGPPTDTQFPTRWPDEQDIPGWRAFMESYYARGQSFCLDLMEALEIGLELPKNTLRSMCIPDGSELRLLHYPEIPAAELRTGDTARIWPHTDFGLITLLFQDGVGGLEVEDPLQQGHYIEVAREQPYEMIVNVSATFERWMNGVIKAAVHRVNITPEGKHVEDAVVPERWSAAYFFKAHKMAHAGPLPAFVTPERPALYDNITALEFQKRRTDLVYTGQQLKVEEAA</sequence>
<feature type="chain" id="PRO_0000444552" description="2-oxoglutarate-dependent dioxygenase imqE">
    <location>
        <begin position="1"/>
        <end position="364"/>
    </location>
</feature>
<feature type="domain" description="Fe2OG dioxygenase" evidence="1">
    <location>
        <begin position="199"/>
        <end position="315"/>
    </location>
</feature>
<feature type="region of interest" description="Disordered" evidence="2">
    <location>
        <begin position="73"/>
        <end position="92"/>
    </location>
</feature>
<feature type="binding site" evidence="1">
    <location>
        <position position="227"/>
    </location>
    <ligand>
        <name>Fe cation</name>
        <dbReference type="ChEBI" id="CHEBI:24875"/>
    </ligand>
</feature>
<feature type="binding site" evidence="1">
    <location>
        <position position="229"/>
    </location>
    <ligand>
        <name>Fe cation</name>
        <dbReference type="ChEBI" id="CHEBI:24875"/>
    </ligand>
</feature>
<feature type="binding site" evidence="1">
    <location>
        <position position="287"/>
    </location>
    <ligand>
        <name>Fe cation</name>
        <dbReference type="ChEBI" id="CHEBI:24875"/>
    </ligand>
</feature>
<feature type="binding site" evidence="1">
    <location>
        <position position="306"/>
    </location>
    <ligand>
        <name>2-oxoglutarate</name>
        <dbReference type="ChEBI" id="CHEBI:16810"/>
    </ligand>
</feature>
<keyword id="KW-0408">Iron</keyword>
<keyword id="KW-0479">Metal-binding</keyword>
<keyword id="KW-0560">Oxidoreductase</keyword>
<accession>B8NI22</accession>
<gene>
    <name evidence="4" type="primary">imqE</name>
    <name type="ORF">AFLA_064270</name>
</gene>
<evidence type="ECO:0000255" key="1">
    <source>
        <dbReference type="PROSITE-ProRule" id="PRU00805"/>
    </source>
</evidence>
<evidence type="ECO:0000256" key="2">
    <source>
        <dbReference type="SAM" id="MobiDB-lite"/>
    </source>
</evidence>
<evidence type="ECO:0000269" key="3">
    <source>
    </source>
</evidence>
<evidence type="ECO:0000303" key="4">
    <source>
    </source>
</evidence>
<evidence type="ECO:0000305" key="5"/>
<evidence type="ECO:0000305" key="6">
    <source>
    </source>
</evidence>
<comment type="function">
    <text evidence="3">2-oxoglutarate-dependent dioxygenase; part of the gene cluster that mediates the biosynthesis of imizoquins A to D, tripeptide-derived alkaloids that serve a protective role against oxidative stress that are essential for normal germination (PubMed:29182847). ImqB is a canonical three-module NRPS that assembles the tripeptide backbone of the imizoquins via condensation of Trp, Tyr, and Leu-derived precursors (PubMed:29182847). N-methylation by imqF and phenol oxidation by imqC, followed by cyclization via the FAD-dependent oxidase imqH carry out the three-step transformation of L-tyrosine into tetrahydroisoquinoline (PubMed:29182847). Importantly, this sequence requires the presence of a free amine in the tyrosine moiety, indicating that isoquinoline formation occurs prior to peptide bond formation (PubMed:29182847). The imidazolidin-4-one ring of imizoquins could form following additional oxidation of the methyl-derived bridgehead carbon by imqH (PubMed:29182847). Lastly, O-methylation by imqG and leucine hydroxylation by imqE complete biosynthesis of the imizoquins (PubMed:29182847).</text>
</comment>
<comment type="cofactor">
    <cofactor evidence="1">
        <name>Fe(2+)</name>
        <dbReference type="ChEBI" id="CHEBI:29033"/>
    </cofactor>
    <text evidence="1">Binds 1 Fe(2+) ion per subunit.</text>
</comment>
<comment type="pathway">
    <text evidence="6">Secondary metabolite biosynthesis.</text>
</comment>
<comment type="induction">
    <text evidence="3">Expression is down-regulated by ralstonins, lipopeptides produced by the plant pathogenic bacteria Ralstonia solanacearum (PubMed:29182847). Expression is positively regulated by the imizoquins cluster-specific transcription regulator imqK (PubMed:29182847).</text>
</comment>
<comment type="similarity">
    <text evidence="5">Belongs to the iron/ascorbate-dependent oxidoreductase family.</text>
</comment>
<name>IMQE_ASPFN</name>
<proteinExistence type="evidence at transcript level"/>
<protein>
    <recommendedName>
        <fullName evidence="4">2-oxoglutarate-dependent dioxygenase imqE</fullName>
        <ecNumber evidence="6">1.14.-.-</ecNumber>
    </recommendedName>
    <alternativeName>
        <fullName evidence="4">Imizoquin biosynthesis cluster protein E</fullName>
    </alternativeName>
</protein>
<reference key="1">
    <citation type="journal article" date="2015" name="Genome Announc.">
        <title>Genome sequence of Aspergillus flavus NRRL 3357, a strain that causes aflatoxin contamination of food and feed.</title>
        <authorList>
            <person name="Nierman W.C."/>
            <person name="Yu J."/>
            <person name="Fedorova-Abrams N.D."/>
            <person name="Losada L."/>
            <person name="Cleveland T.E."/>
            <person name="Bhatnagar D."/>
            <person name="Bennett J.W."/>
            <person name="Dean R."/>
            <person name="Payne G.A."/>
        </authorList>
    </citation>
    <scope>NUCLEOTIDE SEQUENCE [LARGE SCALE GENOMIC DNA]</scope>
    <source>
        <strain>ATCC 200026 / FGSC A1120 / IAM 13836 / NRRL 3357 / JCM 12722 / SRRC 167</strain>
    </source>
</reference>
<reference key="2">
    <citation type="journal article" date="2018" name="ACS Chem. Biol.">
        <title>NRPS-derived isoquinolines and lipopetides mediate antagonism between plant pathogenic fungi and bacteria.</title>
        <authorList>
            <person name="Khalid S."/>
            <person name="Baccile J.A."/>
            <person name="Spraker J.E."/>
            <person name="Tannous J."/>
            <person name="Imran M."/>
            <person name="Schroeder F.C."/>
            <person name="Keller N.P."/>
        </authorList>
    </citation>
    <scope>INDUCTION</scope>
    <scope>FUNCTION</scope>
    <scope>PATHWAY</scope>
</reference>